<organism>
    <name type="scientific">Methylococcus capsulatus (strain ATCC 33009 / NCIMB 11132 / Bath)</name>
    <dbReference type="NCBI Taxonomy" id="243233"/>
    <lineage>
        <taxon>Bacteria</taxon>
        <taxon>Pseudomonadati</taxon>
        <taxon>Pseudomonadota</taxon>
        <taxon>Gammaproteobacteria</taxon>
        <taxon>Methylococcales</taxon>
        <taxon>Methylococcaceae</taxon>
        <taxon>Methylococcus</taxon>
    </lineage>
</organism>
<keyword id="KW-0963">Cytoplasm</keyword>
<keyword id="KW-0378">Hydrolase</keyword>
<keyword id="KW-0520">NAD</keyword>
<keyword id="KW-0554">One-carbon metabolism</keyword>
<keyword id="KW-1185">Reference proteome</keyword>
<protein>
    <recommendedName>
        <fullName evidence="1">Adenosylhomocysteinase</fullName>
        <ecNumber evidence="1">3.13.2.1</ecNumber>
    </recommendedName>
    <alternativeName>
        <fullName evidence="1">S-adenosyl-L-homocysteine hydrolase</fullName>
        <shortName evidence="1">AdoHcyase</shortName>
    </alternativeName>
</protein>
<accession>Q60CG8</accession>
<sequence length="472" mass="51600">MNAVANAASFDDHKVADLSLAGWGRKEIAIAETEMPGLMAIREEYRAAQPLKGARIAGSLHMTIQTAVLIETLVALGAEVRWASCNIFSTQDHAAAAIAADGIPVFAYKGESLDDYWEYTHRILEWPGDVGPNMILDDGGDATLLVTLGARAEKDASLLANPTCEEEEVLFAAIRKRLAAKPGWYSRIQAGIKGVTEETTTGVHRLYEMQAKGRLPFPAINVNDSVTKSKFDNLYGCRESLVDGIKRATDVMIAGKIAVVLGYGDVGKGCAQSLRGLGATVWITEIDPICALQAAMEGYRVVTMDEACDKADIFVTATGNVGVITHDHMVKMKDQAIVCNIGHFDSEIEVAAMRQYTWENIKPQVDHIVLPNGRRIILLAEGRLVNLGCATGHPSFVMSNSFTNQTLAQIELFCHGAKYENKVYVLPKHLDEKVARLHLKKIGARLTELSDEQAAYIGVPKEGPYKPDHYRY</sequence>
<feature type="chain" id="PRO_0000116967" description="Adenosylhomocysteinase">
    <location>
        <begin position="1"/>
        <end position="472"/>
    </location>
</feature>
<feature type="binding site" evidence="1">
    <location>
        <position position="63"/>
    </location>
    <ligand>
        <name>substrate</name>
    </ligand>
</feature>
<feature type="binding site" evidence="1">
    <location>
        <position position="138"/>
    </location>
    <ligand>
        <name>substrate</name>
    </ligand>
</feature>
<feature type="binding site" evidence="1">
    <location>
        <position position="198"/>
    </location>
    <ligand>
        <name>substrate</name>
    </ligand>
</feature>
<feature type="binding site" evidence="1">
    <location>
        <begin position="199"/>
        <end position="201"/>
    </location>
    <ligand>
        <name>NAD(+)</name>
        <dbReference type="ChEBI" id="CHEBI:57540"/>
    </ligand>
</feature>
<feature type="binding site" evidence="1">
    <location>
        <position position="228"/>
    </location>
    <ligand>
        <name>substrate</name>
    </ligand>
</feature>
<feature type="binding site" evidence="1">
    <location>
        <position position="232"/>
    </location>
    <ligand>
        <name>substrate</name>
    </ligand>
</feature>
<feature type="binding site" evidence="1">
    <location>
        <position position="233"/>
    </location>
    <ligand>
        <name>NAD(+)</name>
        <dbReference type="ChEBI" id="CHEBI:57540"/>
    </ligand>
</feature>
<feature type="binding site" evidence="1">
    <location>
        <begin position="262"/>
        <end position="267"/>
    </location>
    <ligand>
        <name>NAD(+)</name>
        <dbReference type="ChEBI" id="CHEBI:57540"/>
    </ligand>
</feature>
<feature type="binding site" evidence="1">
    <location>
        <position position="285"/>
    </location>
    <ligand>
        <name>NAD(+)</name>
        <dbReference type="ChEBI" id="CHEBI:57540"/>
    </ligand>
</feature>
<feature type="binding site" evidence="1">
    <location>
        <position position="320"/>
    </location>
    <ligand>
        <name>NAD(+)</name>
        <dbReference type="ChEBI" id="CHEBI:57540"/>
    </ligand>
</feature>
<feature type="binding site" evidence="1">
    <location>
        <begin position="341"/>
        <end position="343"/>
    </location>
    <ligand>
        <name>NAD(+)</name>
        <dbReference type="ChEBI" id="CHEBI:57540"/>
    </ligand>
</feature>
<feature type="binding site" evidence="1">
    <location>
        <position position="386"/>
    </location>
    <ligand>
        <name>NAD(+)</name>
        <dbReference type="ChEBI" id="CHEBI:57540"/>
    </ligand>
</feature>
<proteinExistence type="inferred from homology"/>
<comment type="function">
    <text evidence="1">May play a key role in the regulation of the intracellular concentration of adenosylhomocysteine.</text>
</comment>
<comment type="catalytic activity">
    <reaction evidence="1">
        <text>S-adenosyl-L-homocysteine + H2O = L-homocysteine + adenosine</text>
        <dbReference type="Rhea" id="RHEA:21708"/>
        <dbReference type="ChEBI" id="CHEBI:15377"/>
        <dbReference type="ChEBI" id="CHEBI:16335"/>
        <dbReference type="ChEBI" id="CHEBI:57856"/>
        <dbReference type="ChEBI" id="CHEBI:58199"/>
        <dbReference type="EC" id="3.13.2.1"/>
    </reaction>
</comment>
<comment type="cofactor">
    <cofactor evidence="1">
        <name>NAD(+)</name>
        <dbReference type="ChEBI" id="CHEBI:57540"/>
    </cofactor>
    <text evidence="1">Binds 1 NAD(+) per subunit.</text>
</comment>
<comment type="pathway">
    <text evidence="1">Amino-acid biosynthesis; L-homocysteine biosynthesis; L-homocysteine from S-adenosyl-L-homocysteine: step 1/1.</text>
</comment>
<comment type="subcellular location">
    <subcellularLocation>
        <location evidence="1">Cytoplasm</location>
    </subcellularLocation>
</comment>
<comment type="similarity">
    <text evidence="1">Belongs to the adenosylhomocysteinase family.</text>
</comment>
<name>SAHH_METCA</name>
<dbReference type="EC" id="3.13.2.1" evidence="1"/>
<dbReference type="EMBL" id="AE017282">
    <property type="protein sequence ID" value="AAU90631.1"/>
    <property type="molecule type" value="Genomic_DNA"/>
</dbReference>
<dbReference type="RefSeq" id="WP_010959508.1">
    <property type="nucleotide sequence ID" value="NC_002977.6"/>
</dbReference>
<dbReference type="SMR" id="Q60CG8"/>
<dbReference type="STRING" id="243233.MCA0138"/>
<dbReference type="GeneID" id="88222487"/>
<dbReference type="KEGG" id="mca:MCA0138"/>
<dbReference type="eggNOG" id="COG0499">
    <property type="taxonomic scope" value="Bacteria"/>
</dbReference>
<dbReference type="HOGENOM" id="CLU_025194_2_1_6"/>
<dbReference type="UniPathway" id="UPA00314">
    <property type="reaction ID" value="UER00076"/>
</dbReference>
<dbReference type="Proteomes" id="UP000006821">
    <property type="component" value="Chromosome"/>
</dbReference>
<dbReference type="GO" id="GO:0005829">
    <property type="term" value="C:cytosol"/>
    <property type="evidence" value="ECO:0007669"/>
    <property type="project" value="TreeGrafter"/>
</dbReference>
<dbReference type="GO" id="GO:0004013">
    <property type="term" value="F:adenosylhomocysteinase activity"/>
    <property type="evidence" value="ECO:0007669"/>
    <property type="project" value="UniProtKB-UniRule"/>
</dbReference>
<dbReference type="GO" id="GO:0071269">
    <property type="term" value="P:L-homocysteine biosynthetic process"/>
    <property type="evidence" value="ECO:0007669"/>
    <property type="project" value="UniProtKB-UniRule"/>
</dbReference>
<dbReference type="GO" id="GO:0006730">
    <property type="term" value="P:one-carbon metabolic process"/>
    <property type="evidence" value="ECO:0007669"/>
    <property type="project" value="UniProtKB-KW"/>
</dbReference>
<dbReference type="GO" id="GO:0033353">
    <property type="term" value="P:S-adenosylmethionine cycle"/>
    <property type="evidence" value="ECO:0007669"/>
    <property type="project" value="TreeGrafter"/>
</dbReference>
<dbReference type="CDD" id="cd00401">
    <property type="entry name" value="SAHH"/>
    <property type="match status" value="1"/>
</dbReference>
<dbReference type="FunFam" id="3.40.50.720:FF:000004">
    <property type="entry name" value="Adenosylhomocysteinase"/>
    <property type="match status" value="1"/>
</dbReference>
<dbReference type="Gene3D" id="3.40.50.1480">
    <property type="entry name" value="Adenosylhomocysteinase-like"/>
    <property type="match status" value="1"/>
</dbReference>
<dbReference type="Gene3D" id="3.40.50.720">
    <property type="entry name" value="NAD(P)-binding Rossmann-like Domain"/>
    <property type="match status" value="1"/>
</dbReference>
<dbReference type="HAMAP" id="MF_00563">
    <property type="entry name" value="AdoHcyase"/>
    <property type="match status" value="1"/>
</dbReference>
<dbReference type="InterPro" id="IPR042172">
    <property type="entry name" value="Adenosylhomocyst_ase-like_sf"/>
</dbReference>
<dbReference type="InterPro" id="IPR000043">
    <property type="entry name" value="Adenosylhomocysteinase-like"/>
</dbReference>
<dbReference type="InterPro" id="IPR015878">
    <property type="entry name" value="Ado_hCys_hydrolase_NAD-bd"/>
</dbReference>
<dbReference type="InterPro" id="IPR036291">
    <property type="entry name" value="NAD(P)-bd_dom_sf"/>
</dbReference>
<dbReference type="InterPro" id="IPR020082">
    <property type="entry name" value="S-Ado-L-homoCys_hydrolase_CS"/>
</dbReference>
<dbReference type="NCBIfam" id="TIGR00936">
    <property type="entry name" value="ahcY"/>
    <property type="match status" value="1"/>
</dbReference>
<dbReference type="NCBIfam" id="NF004005">
    <property type="entry name" value="PRK05476.2-3"/>
    <property type="match status" value="1"/>
</dbReference>
<dbReference type="PANTHER" id="PTHR23420">
    <property type="entry name" value="ADENOSYLHOMOCYSTEINASE"/>
    <property type="match status" value="1"/>
</dbReference>
<dbReference type="PANTHER" id="PTHR23420:SF0">
    <property type="entry name" value="ADENOSYLHOMOCYSTEINASE"/>
    <property type="match status" value="1"/>
</dbReference>
<dbReference type="Pfam" id="PF05221">
    <property type="entry name" value="AdoHcyase"/>
    <property type="match status" value="1"/>
</dbReference>
<dbReference type="Pfam" id="PF00670">
    <property type="entry name" value="AdoHcyase_NAD"/>
    <property type="match status" value="1"/>
</dbReference>
<dbReference type="PIRSF" id="PIRSF001109">
    <property type="entry name" value="Ad_hcy_hydrolase"/>
    <property type="match status" value="1"/>
</dbReference>
<dbReference type="SMART" id="SM00996">
    <property type="entry name" value="AdoHcyase"/>
    <property type="match status" value="1"/>
</dbReference>
<dbReference type="SMART" id="SM00997">
    <property type="entry name" value="AdoHcyase_NAD"/>
    <property type="match status" value="1"/>
</dbReference>
<dbReference type="SUPFAM" id="SSF52283">
    <property type="entry name" value="Formate/glycerate dehydrogenase catalytic domain-like"/>
    <property type="match status" value="1"/>
</dbReference>
<dbReference type="SUPFAM" id="SSF51735">
    <property type="entry name" value="NAD(P)-binding Rossmann-fold domains"/>
    <property type="match status" value="1"/>
</dbReference>
<dbReference type="PROSITE" id="PS00738">
    <property type="entry name" value="ADOHCYASE_1"/>
    <property type="match status" value="1"/>
</dbReference>
<dbReference type="PROSITE" id="PS00739">
    <property type="entry name" value="ADOHCYASE_2"/>
    <property type="match status" value="1"/>
</dbReference>
<reference key="1">
    <citation type="journal article" date="2004" name="PLoS Biol.">
        <title>Genomic insights into methanotrophy: the complete genome sequence of Methylococcus capsulatus (Bath).</title>
        <authorList>
            <person name="Ward N.L."/>
            <person name="Larsen O."/>
            <person name="Sakwa J."/>
            <person name="Bruseth L."/>
            <person name="Khouri H.M."/>
            <person name="Durkin A.S."/>
            <person name="Dimitrov G."/>
            <person name="Jiang L."/>
            <person name="Scanlan D."/>
            <person name="Kang K.H."/>
            <person name="Lewis M.R."/>
            <person name="Nelson K.E."/>
            <person name="Methe B.A."/>
            <person name="Wu M."/>
            <person name="Heidelberg J.F."/>
            <person name="Paulsen I.T."/>
            <person name="Fouts D.E."/>
            <person name="Ravel J."/>
            <person name="Tettelin H."/>
            <person name="Ren Q."/>
            <person name="Read T.D."/>
            <person name="DeBoy R.T."/>
            <person name="Seshadri R."/>
            <person name="Salzberg S.L."/>
            <person name="Jensen H.B."/>
            <person name="Birkeland N.K."/>
            <person name="Nelson W.C."/>
            <person name="Dodson R.J."/>
            <person name="Grindhaug S.H."/>
            <person name="Holt I.E."/>
            <person name="Eidhammer I."/>
            <person name="Jonasen I."/>
            <person name="Vanaken S."/>
            <person name="Utterback T.R."/>
            <person name="Feldblyum T.V."/>
            <person name="Fraser C.M."/>
            <person name="Lillehaug J.R."/>
            <person name="Eisen J.A."/>
        </authorList>
    </citation>
    <scope>NUCLEOTIDE SEQUENCE [LARGE SCALE GENOMIC DNA]</scope>
    <source>
        <strain>ATCC 33009 / NCIMB 11132 / Bath</strain>
    </source>
</reference>
<gene>
    <name evidence="1" type="primary">ahcY</name>
    <name type="ordered locus">MCA0138</name>
</gene>
<evidence type="ECO:0000255" key="1">
    <source>
        <dbReference type="HAMAP-Rule" id="MF_00563"/>
    </source>
</evidence>